<organism>
    <name type="scientific">Dichelobacter nodosus (strain VCS1703A)</name>
    <dbReference type="NCBI Taxonomy" id="246195"/>
    <lineage>
        <taxon>Bacteria</taxon>
        <taxon>Pseudomonadati</taxon>
        <taxon>Pseudomonadota</taxon>
        <taxon>Gammaproteobacteria</taxon>
        <taxon>Cardiobacteriales</taxon>
        <taxon>Cardiobacteriaceae</taxon>
        <taxon>Dichelobacter</taxon>
    </lineage>
</organism>
<dbReference type="EC" id="2.7.7.3" evidence="1"/>
<dbReference type="EMBL" id="CP000513">
    <property type="protein sequence ID" value="ABQ13829.1"/>
    <property type="molecule type" value="Genomic_DNA"/>
</dbReference>
<dbReference type="RefSeq" id="WP_012031317.1">
    <property type="nucleotide sequence ID" value="NC_009446.1"/>
</dbReference>
<dbReference type="SMR" id="A5EXY9"/>
<dbReference type="STRING" id="246195.DNO_1005"/>
<dbReference type="KEGG" id="dno:DNO_1005"/>
<dbReference type="eggNOG" id="COG0669">
    <property type="taxonomic scope" value="Bacteria"/>
</dbReference>
<dbReference type="HOGENOM" id="CLU_100149_0_1_6"/>
<dbReference type="OrthoDB" id="9806661at2"/>
<dbReference type="UniPathway" id="UPA00241">
    <property type="reaction ID" value="UER00355"/>
</dbReference>
<dbReference type="Proteomes" id="UP000000248">
    <property type="component" value="Chromosome"/>
</dbReference>
<dbReference type="GO" id="GO:0005737">
    <property type="term" value="C:cytoplasm"/>
    <property type="evidence" value="ECO:0007669"/>
    <property type="project" value="UniProtKB-SubCell"/>
</dbReference>
<dbReference type="GO" id="GO:0005524">
    <property type="term" value="F:ATP binding"/>
    <property type="evidence" value="ECO:0007669"/>
    <property type="project" value="UniProtKB-KW"/>
</dbReference>
<dbReference type="GO" id="GO:0004595">
    <property type="term" value="F:pantetheine-phosphate adenylyltransferase activity"/>
    <property type="evidence" value="ECO:0007669"/>
    <property type="project" value="UniProtKB-UniRule"/>
</dbReference>
<dbReference type="GO" id="GO:0015937">
    <property type="term" value="P:coenzyme A biosynthetic process"/>
    <property type="evidence" value="ECO:0007669"/>
    <property type="project" value="UniProtKB-UniRule"/>
</dbReference>
<dbReference type="CDD" id="cd02163">
    <property type="entry name" value="PPAT"/>
    <property type="match status" value="1"/>
</dbReference>
<dbReference type="Gene3D" id="3.40.50.620">
    <property type="entry name" value="HUPs"/>
    <property type="match status" value="1"/>
</dbReference>
<dbReference type="HAMAP" id="MF_00151">
    <property type="entry name" value="PPAT_bact"/>
    <property type="match status" value="1"/>
</dbReference>
<dbReference type="InterPro" id="IPR004821">
    <property type="entry name" value="Cyt_trans-like"/>
</dbReference>
<dbReference type="InterPro" id="IPR001980">
    <property type="entry name" value="PPAT"/>
</dbReference>
<dbReference type="InterPro" id="IPR014729">
    <property type="entry name" value="Rossmann-like_a/b/a_fold"/>
</dbReference>
<dbReference type="NCBIfam" id="TIGR01510">
    <property type="entry name" value="coaD_prev_kdtB"/>
    <property type="match status" value="1"/>
</dbReference>
<dbReference type="NCBIfam" id="TIGR00125">
    <property type="entry name" value="cyt_tran_rel"/>
    <property type="match status" value="1"/>
</dbReference>
<dbReference type="PANTHER" id="PTHR21342">
    <property type="entry name" value="PHOSPHOPANTETHEINE ADENYLYLTRANSFERASE"/>
    <property type="match status" value="1"/>
</dbReference>
<dbReference type="PANTHER" id="PTHR21342:SF1">
    <property type="entry name" value="PHOSPHOPANTETHEINE ADENYLYLTRANSFERASE"/>
    <property type="match status" value="1"/>
</dbReference>
<dbReference type="Pfam" id="PF01467">
    <property type="entry name" value="CTP_transf_like"/>
    <property type="match status" value="1"/>
</dbReference>
<dbReference type="PRINTS" id="PR01020">
    <property type="entry name" value="LPSBIOSNTHSS"/>
</dbReference>
<dbReference type="SUPFAM" id="SSF52374">
    <property type="entry name" value="Nucleotidylyl transferase"/>
    <property type="match status" value="1"/>
</dbReference>
<keyword id="KW-0067">ATP-binding</keyword>
<keyword id="KW-0173">Coenzyme A biosynthesis</keyword>
<keyword id="KW-0963">Cytoplasm</keyword>
<keyword id="KW-0460">Magnesium</keyword>
<keyword id="KW-0547">Nucleotide-binding</keyword>
<keyword id="KW-0548">Nucleotidyltransferase</keyword>
<keyword id="KW-1185">Reference proteome</keyword>
<keyword id="KW-0808">Transferase</keyword>
<name>COAD_DICNV</name>
<reference key="1">
    <citation type="journal article" date="2007" name="Nat. Biotechnol.">
        <title>Genome sequence and identification of candidate vaccine antigens from the animal pathogen Dichelobacter nodosus.</title>
        <authorList>
            <person name="Myers G.S.A."/>
            <person name="Parker D."/>
            <person name="Al-Hasani K."/>
            <person name="Kennan R.M."/>
            <person name="Seemann T."/>
            <person name="Ren Q."/>
            <person name="Badger J.H."/>
            <person name="Selengut J.D."/>
            <person name="Deboy R.T."/>
            <person name="Tettelin H."/>
            <person name="Boyce J.D."/>
            <person name="McCarl V.P."/>
            <person name="Han X."/>
            <person name="Nelson W.C."/>
            <person name="Madupu R."/>
            <person name="Mohamoud Y."/>
            <person name="Holley T."/>
            <person name="Fedorova N."/>
            <person name="Khouri H."/>
            <person name="Bottomley S.P."/>
            <person name="Whittington R.J."/>
            <person name="Adler B."/>
            <person name="Songer J.G."/>
            <person name="Rood J.I."/>
            <person name="Paulsen I.T."/>
        </authorList>
    </citation>
    <scope>NUCLEOTIDE SEQUENCE [LARGE SCALE GENOMIC DNA]</scope>
    <source>
        <strain>VCS1703A</strain>
    </source>
</reference>
<sequence>MRIALYPGTFDPITLGHQEIIERGSFLCDRLYIGVAVGHHKKTLFSLSERCELVNGVLADLTLHCPVEVVPYCGLLATLYQKLHANILIRGLRSAGDFEYERQLFYANQHLNAQIETVFLLPAPQYSFISSTLVRELAQLNGALDGLVHDIVKKKLRLNSGGQ</sequence>
<comment type="function">
    <text evidence="1">Reversibly transfers an adenylyl group from ATP to 4'-phosphopantetheine, yielding dephospho-CoA (dPCoA) and pyrophosphate.</text>
</comment>
<comment type="catalytic activity">
    <reaction evidence="1">
        <text>(R)-4'-phosphopantetheine + ATP + H(+) = 3'-dephospho-CoA + diphosphate</text>
        <dbReference type="Rhea" id="RHEA:19801"/>
        <dbReference type="ChEBI" id="CHEBI:15378"/>
        <dbReference type="ChEBI" id="CHEBI:30616"/>
        <dbReference type="ChEBI" id="CHEBI:33019"/>
        <dbReference type="ChEBI" id="CHEBI:57328"/>
        <dbReference type="ChEBI" id="CHEBI:61723"/>
        <dbReference type="EC" id="2.7.7.3"/>
    </reaction>
</comment>
<comment type="cofactor">
    <cofactor evidence="1">
        <name>Mg(2+)</name>
        <dbReference type="ChEBI" id="CHEBI:18420"/>
    </cofactor>
</comment>
<comment type="pathway">
    <text evidence="1">Cofactor biosynthesis; coenzyme A biosynthesis; CoA from (R)-pantothenate: step 4/5.</text>
</comment>
<comment type="subunit">
    <text evidence="1">Homohexamer.</text>
</comment>
<comment type="subcellular location">
    <subcellularLocation>
        <location evidence="1">Cytoplasm</location>
    </subcellularLocation>
</comment>
<comment type="similarity">
    <text evidence="1">Belongs to the bacterial CoaD family.</text>
</comment>
<accession>A5EXY9</accession>
<evidence type="ECO:0000255" key="1">
    <source>
        <dbReference type="HAMAP-Rule" id="MF_00151"/>
    </source>
</evidence>
<proteinExistence type="inferred from homology"/>
<feature type="chain" id="PRO_1000118074" description="Phosphopantetheine adenylyltransferase">
    <location>
        <begin position="1"/>
        <end position="163"/>
    </location>
</feature>
<feature type="binding site" evidence="1">
    <location>
        <begin position="9"/>
        <end position="10"/>
    </location>
    <ligand>
        <name>ATP</name>
        <dbReference type="ChEBI" id="CHEBI:30616"/>
    </ligand>
</feature>
<feature type="binding site" evidence="1">
    <location>
        <position position="9"/>
    </location>
    <ligand>
        <name>substrate</name>
    </ligand>
</feature>
<feature type="binding site" evidence="1">
    <location>
        <position position="17"/>
    </location>
    <ligand>
        <name>ATP</name>
        <dbReference type="ChEBI" id="CHEBI:30616"/>
    </ligand>
</feature>
<feature type="binding site" evidence="1">
    <location>
        <position position="41"/>
    </location>
    <ligand>
        <name>substrate</name>
    </ligand>
</feature>
<feature type="binding site" evidence="1">
    <location>
        <position position="76"/>
    </location>
    <ligand>
        <name>substrate</name>
    </ligand>
</feature>
<feature type="binding site" evidence="1">
    <location>
        <position position="90"/>
    </location>
    <ligand>
        <name>substrate</name>
    </ligand>
</feature>
<feature type="binding site" evidence="1">
    <location>
        <begin position="91"/>
        <end position="93"/>
    </location>
    <ligand>
        <name>ATP</name>
        <dbReference type="ChEBI" id="CHEBI:30616"/>
    </ligand>
</feature>
<feature type="binding site" evidence="1">
    <location>
        <position position="101"/>
    </location>
    <ligand>
        <name>ATP</name>
        <dbReference type="ChEBI" id="CHEBI:30616"/>
    </ligand>
</feature>
<feature type="binding site" evidence="1">
    <location>
        <begin position="126"/>
        <end position="132"/>
    </location>
    <ligand>
        <name>ATP</name>
        <dbReference type="ChEBI" id="CHEBI:30616"/>
    </ligand>
</feature>
<feature type="site" description="Transition state stabilizer" evidence="1">
    <location>
        <position position="17"/>
    </location>
</feature>
<gene>
    <name evidence="1" type="primary">coaD</name>
    <name type="ordered locus">DNO_1005</name>
</gene>
<protein>
    <recommendedName>
        <fullName evidence="1">Phosphopantetheine adenylyltransferase</fullName>
        <ecNumber evidence="1">2.7.7.3</ecNumber>
    </recommendedName>
    <alternativeName>
        <fullName evidence="1">Dephospho-CoA pyrophosphorylase</fullName>
    </alternativeName>
    <alternativeName>
        <fullName evidence="1">Pantetheine-phosphate adenylyltransferase</fullName>
        <shortName evidence="1">PPAT</shortName>
    </alternativeName>
</protein>